<evidence type="ECO:0000250" key="1"/>
<evidence type="ECO:0000255" key="2">
    <source>
        <dbReference type="PROSITE-ProRule" id="PRU01251"/>
    </source>
</evidence>
<evidence type="ECO:0000305" key="3"/>
<protein>
    <recommendedName>
        <fullName>Chaperone protein ClpB</fullName>
    </recommendedName>
</protein>
<name>CLPB_RICCN</name>
<keyword id="KW-0067">ATP-binding</keyword>
<keyword id="KW-0143">Chaperone</keyword>
<keyword id="KW-0175">Coiled coil</keyword>
<keyword id="KW-0963">Cytoplasm</keyword>
<keyword id="KW-0547">Nucleotide-binding</keyword>
<keyword id="KW-0677">Repeat</keyword>
<keyword id="KW-0346">Stress response</keyword>
<gene>
    <name type="primary">clpB</name>
    <name type="ordered locus">RC0059</name>
</gene>
<sequence>MNIDKFTAHAKSVIASSQLLAAKNDHQQILPLHLLSSLLSEETGIIQTLINNTGGNINLLKDQVQLELNKIPKVQVEGGGQVYSSAEALKVLEKASSIAKDNGDSFVTIERIFEALTYDNTIAGKILTNNGINNKKIATAILQFRKGKKADTESAENSYDALKKYGRDVTELAESGKLDPIIGRDEEIRRTVQVLSRRMKNNPVLIGEPGVGKTAIIEGLAQRIFSKDVPESLINCRIIELDMGALIAGAKYRGEFEERLKAVLSEIKESSGEIILFIDELHLLVGTGKTDGAMDASNLLKPMLARGELHCIGATTLDEYRKYIEKDAALARRFQPVYVSEPTVEDTISILRGIKEKYELHHAVRISDSAIVAAATLSNRYITDRYLPDKAIDLIDEACSRMKIELSSKPEELDELDRRIIQIKIELAALKKENDEHSKKKIEHLTTALEKLESQSYDMGAKWQAEKSKLQQTQKLKEELDRSRNELERAERDANLAKASELKYGIIPEIMKKLQEAESMDNKGLLKEIVSESDIASIISRITGIPIDTMLSSERERLLVMEQKLRESVIGQDKAIKGVSDAVRRSRAGIQDINRPLGSFLFLGPTGVGKTELTKALAGFLFDDRNAILRIDMSEYMEKHAISRLIGAPPGYIGYDQGGVLTEAVRRRPYQVILFDEVEKAHPDIFNIMLQILDEGRLTDSQGITVDFKNTIIVLTSNLGAEILVNQKEDEDTYKVKDEVMEYVKAVFKPEFLNRLDEIILFHRLNRNNIHDIVKIQLESLKKILLAQNIILEFDESALNYLAEKGYDPSFGARPLKRLIQREIQNNLAKMILAGEISSGKTVKINSKDKELKVTMS</sequence>
<dbReference type="EMBL" id="AE006914">
    <property type="protein sequence ID" value="AAL02597.1"/>
    <property type="molecule type" value="Genomic_DNA"/>
</dbReference>
<dbReference type="PIR" id="C97707">
    <property type="entry name" value="C97707"/>
</dbReference>
<dbReference type="RefSeq" id="WP_010976745.1">
    <property type="nucleotide sequence ID" value="NC_003103.1"/>
</dbReference>
<dbReference type="SMR" id="Q92JK8"/>
<dbReference type="GeneID" id="928600"/>
<dbReference type="KEGG" id="rco:RC0059"/>
<dbReference type="PATRIC" id="fig|272944.4.peg.70"/>
<dbReference type="HOGENOM" id="CLU_005070_4_0_5"/>
<dbReference type="Proteomes" id="UP000000816">
    <property type="component" value="Chromosome"/>
</dbReference>
<dbReference type="GO" id="GO:0005737">
    <property type="term" value="C:cytoplasm"/>
    <property type="evidence" value="ECO:0007669"/>
    <property type="project" value="UniProtKB-SubCell"/>
</dbReference>
<dbReference type="GO" id="GO:0005524">
    <property type="term" value="F:ATP binding"/>
    <property type="evidence" value="ECO:0007669"/>
    <property type="project" value="UniProtKB-KW"/>
</dbReference>
<dbReference type="GO" id="GO:0016887">
    <property type="term" value="F:ATP hydrolysis activity"/>
    <property type="evidence" value="ECO:0007669"/>
    <property type="project" value="InterPro"/>
</dbReference>
<dbReference type="GO" id="GO:0034605">
    <property type="term" value="P:cellular response to heat"/>
    <property type="evidence" value="ECO:0007669"/>
    <property type="project" value="TreeGrafter"/>
</dbReference>
<dbReference type="GO" id="GO:0042026">
    <property type="term" value="P:protein refolding"/>
    <property type="evidence" value="ECO:0007669"/>
    <property type="project" value="InterPro"/>
</dbReference>
<dbReference type="CDD" id="cd00009">
    <property type="entry name" value="AAA"/>
    <property type="match status" value="1"/>
</dbReference>
<dbReference type="CDD" id="cd19499">
    <property type="entry name" value="RecA-like_ClpB_Hsp104-like"/>
    <property type="match status" value="1"/>
</dbReference>
<dbReference type="FunFam" id="1.10.8.60:FF:000017">
    <property type="entry name" value="ATP-dependent chaperone ClpB"/>
    <property type="match status" value="1"/>
</dbReference>
<dbReference type="FunFam" id="3.40.50.300:FF:000120">
    <property type="entry name" value="ATP-dependent chaperone ClpB"/>
    <property type="match status" value="1"/>
</dbReference>
<dbReference type="FunFam" id="3.40.50.300:FF:000025">
    <property type="entry name" value="ATP-dependent Clp protease subunit"/>
    <property type="match status" value="1"/>
</dbReference>
<dbReference type="FunFam" id="3.40.50.300:FF:000010">
    <property type="entry name" value="Chaperone clpB 1, putative"/>
    <property type="match status" value="1"/>
</dbReference>
<dbReference type="Gene3D" id="1.10.8.60">
    <property type="match status" value="1"/>
</dbReference>
<dbReference type="Gene3D" id="1.10.1780.10">
    <property type="entry name" value="Clp, N-terminal domain"/>
    <property type="match status" value="1"/>
</dbReference>
<dbReference type="Gene3D" id="3.40.50.300">
    <property type="entry name" value="P-loop containing nucleotide triphosphate hydrolases"/>
    <property type="match status" value="3"/>
</dbReference>
<dbReference type="InterPro" id="IPR003593">
    <property type="entry name" value="AAA+_ATPase"/>
</dbReference>
<dbReference type="InterPro" id="IPR003959">
    <property type="entry name" value="ATPase_AAA_core"/>
</dbReference>
<dbReference type="InterPro" id="IPR017730">
    <property type="entry name" value="Chaperonin_ClpB"/>
</dbReference>
<dbReference type="InterPro" id="IPR019489">
    <property type="entry name" value="Clp_ATPase_C"/>
</dbReference>
<dbReference type="InterPro" id="IPR036628">
    <property type="entry name" value="Clp_N_dom_sf"/>
</dbReference>
<dbReference type="InterPro" id="IPR004176">
    <property type="entry name" value="Clp_R_dom"/>
</dbReference>
<dbReference type="InterPro" id="IPR001270">
    <property type="entry name" value="ClpA/B"/>
</dbReference>
<dbReference type="InterPro" id="IPR018368">
    <property type="entry name" value="ClpA/B_CS1"/>
</dbReference>
<dbReference type="InterPro" id="IPR028299">
    <property type="entry name" value="ClpA/B_CS2"/>
</dbReference>
<dbReference type="InterPro" id="IPR041546">
    <property type="entry name" value="ClpA/ClpB_AAA_lid"/>
</dbReference>
<dbReference type="InterPro" id="IPR050130">
    <property type="entry name" value="ClpA_ClpB"/>
</dbReference>
<dbReference type="InterPro" id="IPR027417">
    <property type="entry name" value="P-loop_NTPase"/>
</dbReference>
<dbReference type="NCBIfam" id="TIGR03346">
    <property type="entry name" value="chaperone_ClpB"/>
    <property type="match status" value="1"/>
</dbReference>
<dbReference type="PANTHER" id="PTHR11638">
    <property type="entry name" value="ATP-DEPENDENT CLP PROTEASE"/>
    <property type="match status" value="1"/>
</dbReference>
<dbReference type="PANTHER" id="PTHR11638:SF18">
    <property type="entry name" value="HEAT SHOCK PROTEIN 104"/>
    <property type="match status" value="1"/>
</dbReference>
<dbReference type="Pfam" id="PF00004">
    <property type="entry name" value="AAA"/>
    <property type="match status" value="1"/>
</dbReference>
<dbReference type="Pfam" id="PF07724">
    <property type="entry name" value="AAA_2"/>
    <property type="match status" value="1"/>
</dbReference>
<dbReference type="Pfam" id="PF17871">
    <property type="entry name" value="AAA_lid_9"/>
    <property type="match status" value="1"/>
</dbReference>
<dbReference type="Pfam" id="PF02861">
    <property type="entry name" value="Clp_N"/>
    <property type="match status" value="2"/>
</dbReference>
<dbReference type="Pfam" id="PF10431">
    <property type="entry name" value="ClpB_D2-small"/>
    <property type="match status" value="1"/>
</dbReference>
<dbReference type="PRINTS" id="PR00300">
    <property type="entry name" value="CLPPROTEASEA"/>
</dbReference>
<dbReference type="SMART" id="SM00382">
    <property type="entry name" value="AAA"/>
    <property type="match status" value="2"/>
</dbReference>
<dbReference type="SMART" id="SM01086">
    <property type="entry name" value="ClpB_D2-small"/>
    <property type="match status" value="1"/>
</dbReference>
<dbReference type="SUPFAM" id="SSF81923">
    <property type="entry name" value="Double Clp-N motif"/>
    <property type="match status" value="1"/>
</dbReference>
<dbReference type="SUPFAM" id="SSF52540">
    <property type="entry name" value="P-loop containing nucleoside triphosphate hydrolases"/>
    <property type="match status" value="2"/>
</dbReference>
<dbReference type="PROSITE" id="PS51903">
    <property type="entry name" value="CLP_R"/>
    <property type="match status" value="1"/>
</dbReference>
<dbReference type="PROSITE" id="PS00870">
    <property type="entry name" value="CLPAB_1"/>
    <property type="match status" value="1"/>
</dbReference>
<dbReference type="PROSITE" id="PS00871">
    <property type="entry name" value="CLPAB_2"/>
    <property type="match status" value="1"/>
</dbReference>
<accession>Q92JK8</accession>
<feature type="chain" id="PRO_0000191169" description="Chaperone protein ClpB">
    <location>
        <begin position="1"/>
        <end position="857"/>
    </location>
</feature>
<feature type="domain" description="Clp R" evidence="2">
    <location>
        <begin position="3"/>
        <end position="147"/>
    </location>
</feature>
<feature type="region of interest" description="Repeat 1" evidence="2">
    <location>
        <begin position="6"/>
        <end position="71"/>
    </location>
</feature>
<feature type="region of interest" description="Repeat 2" evidence="2">
    <location>
        <begin position="84"/>
        <end position="147"/>
    </location>
</feature>
<feature type="region of interest" description="NBD1" evidence="1">
    <location>
        <begin position="160"/>
        <end position="341"/>
    </location>
</feature>
<feature type="region of interest" description="Linker" evidence="1">
    <location>
        <begin position="342"/>
        <end position="544"/>
    </location>
</feature>
<feature type="region of interest" description="NBD2" evidence="1">
    <location>
        <begin position="554"/>
        <end position="764"/>
    </location>
</feature>
<feature type="region of interest" description="C-terminal" evidence="1">
    <location>
        <begin position="765"/>
        <end position="857"/>
    </location>
</feature>
<feature type="coiled-coil region" evidence="1">
    <location>
        <begin position="392"/>
        <end position="523"/>
    </location>
</feature>
<feature type="binding site" evidence="1">
    <location>
        <begin position="207"/>
        <end position="214"/>
    </location>
    <ligand>
        <name>ATP</name>
        <dbReference type="ChEBI" id="CHEBI:30616"/>
        <label>1</label>
    </ligand>
</feature>
<feature type="binding site" evidence="1">
    <location>
        <begin position="604"/>
        <end position="611"/>
    </location>
    <ligand>
        <name>ATP</name>
        <dbReference type="ChEBI" id="CHEBI:30616"/>
        <label>2</label>
    </ligand>
</feature>
<organism>
    <name type="scientific">Rickettsia conorii (strain ATCC VR-613 / Malish 7)</name>
    <dbReference type="NCBI Taxonomy" id="272944"/>
    <lineage>
        <taxon>Bacteria</taxon>
        <taxon>Pseudomonadati</taxon>
        <taxon>Pseudomonadota</taxon>
        <taxon>Alphaproteobacteria</taxon>
        <taxon>Rickettsiales</taxon>
        <taxon>Rickettsiaceae</taxon>
        <taxon>Rickettsieae</taxon>
        <taxon>Rickettsia</taxon>
        <taxon>spotted fever group</taxon>
    </lineage>
</organism>
<reference key="1">
    <citation type="journal article" date="2001" name="Science">
        <title>Mechanisms of evolution in Rickettsia conorii and R. prowazekii.</title>
        <authorList>
            <person name="Ogata H."/>
            <person name="Audic S."/>
            <person name="Renesto-Audiffren P."/>
            <person name="Fournier P.-E."/>
            <person name="Barbe V."/>
            <person name="Samson D."/>
            <person name="Roux V."/>
            <person name="Cossart P."/>
            <person name="Weissenbach J."/>
            <person name="Claverie J.-M."/>
            <person name="Raoult D."/>
        </authorList>
    </citation>
    <scope>NUCLEOTIDE SEQUENCE [LARGE SCALE GENOMIC DNA]</scope>
    <source>
        <strain>ATCC VR-613 / Malish 7</strain>
    </source>
</reference>
<proteinExistence type="inferred from homology"/>
<comment type="function">
    <text evidence="1">Part of a stress-induced multi-chaperone system, it is involved in the recovery of the cell from heat-induced damage, in cooperation with DnaK, DnaJ and GrpE. Acts before DnaK, in the processing of protein aggregates. Protein binding stimulates the ATPase activity; ATP hydrolysis unfolds the denatured protein aggregates, which probably helps expose new hydrophobic binding sites on the surface of ClpB-bound aggregates, contributing to the solubilization and refolding of denatured protein aggregates by DnaK (By similarity).</text>
</comment>
<comment type="subunit">
    <text evidence="1">Homohexamer. The oligomerization is ATP-dependent (By similarity).</text>
</comment>
<comment type="subcellular location">
    <subcellularLocation>
        <location evidence="3">Cytoplasm</location>
    </subcellularLocation>
</comment>
<comment type="domain">
    <text evidence="1">The Clp repeat (R) domain probably functions as a substrate-discriminating domain, recruiting aggregated proteins to the ClpB hexamer and/or stabilizing bound proteins. The NBD2 domain is responsible for oligomerization, whereas the NBD1 domain stabilizes the hexamer probably in an ATP-dependent manner. The movement of the coiled-coil domain is essential for ClpB ability to rescue proteins from an aggregated state, probably by pulling apart large aggregated proteins, which are bound between the coiled-coils motifs of adjacent ClpB subunits in the functional hexamer (By similarity).</text>
</comment>
<comment type="similarity">
    <text evidence="3">Belongs to the ClpA/ClpB family.</text>
</comment>